<protein>
    <recommendedName>
        <fullName evidence="1">Large ribosomal subunit protein bL12</fullName>
    </recommendedName>
    <alternativeName>
        <fullName evidence="2">50S ribosomal protein L7/L12</fullName>
    </alternativeName>
</protein>
<keyword id="KW-0687">Ribonucleoprotein</keyword>
<keyword id="KW-0689">Ribosomal protein</keyword>
<sequence length="125" mass="12748">MADLAKIVEDLSSLTVLEAAELAKLLEEKWGVSAAAAVAVAAGPAAGAGAAAVEEQTEFTVVLASAGDKKIEVIKEVRAITGLGLKEAKDLVEGAPKPVKEGATKDEAEKLKAQLEKAGAKVELK</sequence>
<reference key="1">
    <citation type="submission" date="2008-12" db="EMBL/GenBank/DDBJ databases">
        <title>Complete sequence of chromosome of Methylobacterium chloromethanicum CM4.</title>
        <authorList>
            <consortium name="US DOE Joint Genome Institute"/>
            <person name="Lucas S."/>
            <person name="Copeland A."/>
            <person name="Lapidus A."/>
            <person name="Glavina del Rio T."/>
            <person name="Dalin E."/>
            <person name="Tice H."/>
            <person name="Bruce D."/>
            <person name="Goodwin L."/>
            <person name="Pitluck S."/>
            <person name="Chertkov O."/>
            <person name="Brettin T."/>
            <person name="Detter J.C."/>
            <person name="Han C."/>
            <person name="Larimer F."/>
            <person name="Land M."/>
            <person name="Hauser L."/>
            <person name="Kyrpides N."/>
            <person name="Mikhailova N."/>
            <person name="Marx C."/>
            <person name="Richardson P."/>
        </authorList>
    </citation>
    <scope>NUCLEOTIDE SEQUENCE [LARGE SCALE GENOMIC DNA]</scope>
    <source>
        <strain>CM4 / NCIMB 13688</strain>
    </source>
</reference>
<name>RL7_METC4</name>
<organism>
    <name type="scientific">Methylorubrum extorquens (strain CM4 / NCIMB 13688)</name>
    <name type="common">Methylobacterium extorquens</name>
    <dbReference type="NCBI Taxonomy" id="440085"/>
    <lineage>
        <taxon>Bacteria</taxon>
        <taxon>Pseudomonadati</taxon>
        <taxon>Pseudomonadota</taxon>
        <taxon>Alphaproteobacteria</taxon>
        <taxon>Hyphomicrobiales</taxon>
        <taxon>Methylobacteriaceae</taxon>
        <taxon>Methylorubrum</taxon>
    </lineage>
</organism>
<evidence type="ECO:0000255" key="1">
    <source>
        <dbReference type="HAMAP-Rule" id="MF_00368"/>
    </source>
</evidence>
<evidence type="ECO:0000305" key="2"/>
<comment type="function">
    <text evidence="1">Forms part of the ribosomal stalk which helps the ribosome interact with GTP-bound translation factors. Is thus essential for accurate translation.</text>
</comment>
<comment type="subunit">
    <text evidence="1">Homodimer. Part of the ribosomal stalk of the 50S ribosomal subunit. Forms a multimeric L10(L12)X complex, where L10 forms an elongated spine to which 2 to 4 L12 dimers bind in a sequential fashion. Binds GTP-bound translation factors.</text>
</comment>
<comment type="similarity">
    <text evidence="1">Belongs to the bacterial ribosomal protein bL12 family.</text>
</comment>
<feature type="chain" id="PRO_1000195806" description="Large ribosomal subunit protein bL12">
    <location>
        <begin position="1"/>
        <end position="125"/>
    </location>
</feature>
<proteinExistence type="inferred from homology"/>
<gene>
    <name evidence="1" type="primary">rplL</name>
    <name type="ordered locus">Mchl_4385</name>
</gene>
<accession>B7KN44</accession>
<dbReference type="EMBL" id="CP001298">
    <property type="protein sequence ID" value="ACK85161.1"/>
    <property type="molecule type" value="Genomic_DNA"/>
</dbReference>
<dbReference type="RefSeq" id="WP_003597539.1">
    <property type="nucleotide sequence ID" value="NC_011757.1"/>
</dbReference>
<dbReference type="SMR" id="B7KN44"/>
<dbReference type="GeneID" id="72991734"/>
<dbReference type="KEGG" id="mch:Mchl_4385"/>
<dbReference type="HOGENOM" id="CLU_086499_3_0_5"/>
<dbReference type="Proteomes" id="UP000002385">
    <property type="component" value="Chromosome"/>
</dbReference>
<dbReference type="GO" id="GO:0022625">
    <property type="term" value="C:cytosolic large ribosomal subunit"/>
    <property type="evidence" value="ECO:0007669"/>
    <property type="project" value="TreeGrafter"/>
</dbReference>
<dbReference type="GO" id="GO:0003729">
    <property type="term" value="F:mRNA binding"/>
    <property type="evidence" value="ECO:0007669"/>
    <property type="project" value="TreeGrafter"/>
</dbReference>
<dbReference type="GO" id="GO:0003735">
    <property type="term" value="F:structural constituent of ribosome"/>
    <property type="evidence" value="ECO:0007669"/>
    <property type="project" value="InterPro"/>
</dbReference>
<dbReference type="GO" id="GO:0006412">
    <property type="term" value="P:translation"/>
    <property type="evidence" value="ECO:0007669"/>
    <property type="project" value="UniProtKB-UniRule"/>
</dbReference>
<dbReference type="CDD" id="cd00387">
    <property type="entry name" value="Ribosomal_L7_L12"/>
    <property type="match status" value="1"/>
</dbReference>
<dbReference type="FunFam" id="1.20.5.710:FF:000007">
    <property type="entry name" value="50S ribosomal protein L7/L12"/>
    <property type="match status" value="1"/>
</dbReference>
<dbReference type="FunFam" id="3.30.1390.10:FF:000001">
    <property type="entry name" value="50S ribosomal protein L7/L12"/>
    <property type="match status" value="1"/>
</dbReference>
<dbReference type="Gene3D" id="3.30.1390.10">
    <property type="match status" value="1"/>
</dbReference>
<dbReference type="Gene3D" id="1.20.5.710">
    <property type="entry name" value="Single helix bin"/>
    <property type="match status" value="1"/>
</dbReference>
<dbReference type="HAMAP" id="MF_00368">
    <property type="entry name" value="Ribosomal_bL12"/>
    <property type="match status" value="1"/>
</dbReference>
<dbReference type="InterPro" id="IPR000206">
    <property type="entry name" value="Ribosomal_bL12"/>
</dbReference>
<dbReference type="InterPro" id="IPR013823">
    <property type="entry name" value="Ribosomal_bL12_C"/>
</dbReference>
<dbReference type="InterPro" id="IPR014719">
    <property type="entry name" value="Ribosomal_bL12_C/ClpS-like"/>
</dbReference>
<dbReference type="InterPro" id="IPR008932">
    <property type="entry name" value="Ribosomal_bL12_oligo"/>
</dbReference>
<dbReference type="InterPro" id="IPR036235">
    <property type="entry name" value="Ribosomal_bL12_oligo_N_sf"/>
</dbReference>
<dbReference type="NCBIfam" id="TIGR00855">
    <property type="entry name" value="L12"/>
    <property type="match status" value="1"/>
</dbReference>
<dbReference type="PANTHER" id="PTHR45987">
    <property type="entry name" value="39S RIBOSOMAL PROTEIN L12"/>
    <property type="match status" value="1"/>
</dbReference>
<dbReference type="PANTHER" id="PTHR45987:SF4">
    <property type="entry name" value="LARGE RIBOSOMAL SUBUNIT PROTEIN BL12M"/>
    <property type="match status" value="1"/>
</dbReference>
<dbReference type="Pfam" id="PF00542">
    <property type="entry name" value="Ribosomal_L12"/>
    <property type="match status" value="1"/>
</dbReference>
<dbReference type="Pfam" id="PF16320">
    <property type="entry name" value="Ribosomal_L12_N"/>
    <property type="match status" value="1"/>
</dbReference>
<dbReference type="SUPFAM" id="SSF54736">
    <property type="entry name" value="ClpS-like"/>
    <property type="match status" value="1"/>
</dbReference>
<dbReference type="SUPFAM" id="SSF48300">
    <property type="entry name" value="Ribosomal protein L7/12, oligomerisation (N-terminal) domain"/>
    <property type="match status" value="1"/>
</dbReference>